<accession>Q00497</accession>
<proteinExistence type="evidence at protein level"/>
<evidence type="ECO:0000250" key="1"/>
<evidence type="ECO:0000255" key="2"/>
<evidence type="ECO:0000269" key="3">
    <source>
    </source>
</evidence>
<evidence type="ECO:0000305" key="4"/>
<feature type="transit peptide" description="Chloroplast" evidence="2">
    <location>
        <begin position="1"/>
        <end position="65"/>
    </location>
</feature>
<feature type="chain" id="PRO_0000002293" description="Shikimate kinase, chloroplastic">
    <location>
        <begin position="66"/>
        <end position="300"/>
    </location>
</feature>
<feature type="binding site" evidence="1">
    <location>
        <begin position="111"/>
        <end position="118"/>
    </location>
    <ligand>
        <name>ATP</name>
        <dbReference type="ChEBI" id="CHEBI:30616"/>
    </ligand>
</feature>
<feature type="binding site" evidence="1">
    <location>
        <position position="118"/>
    </location>
    <ligand>
        <name>Mg(2+)</name>
        <dbReference type="ChEBI" id="CHEBI:18420"/>
    </ligand>
</feature>
<feature type="binding site" evidence="1">
    <location>
        <position position="136"/>
    </location>
    <ligand>
        <name>substrate</name>
    </ligand>
</feature>
<feature type="binding site" evidence="1">
    <location>
        <position position="161"/>
    </location>
    <ligand>
        <name>substrate</name>
    </ligand>
</feature>
<feature type="binding site" evidence="1">
    <location>
        <position position="183"/>
    </location>
    <ligand>
        <name>substrate</name>
    </ligand>
</feature>
<feature type="binding site" evidence="1">
    <location>
        <position position="222"/>
    </location>
    <ligand>
        <name>ATP</name>
        <dbReference type="ChEBI" id="CHEBI:30616"/>
    </ligand>
</feature>
<dbReference type="EC" id="2.7.1.71"/>
<dbReference type="EMBL" id="X63560">
    <property type="protein sequence ID" value="CAA45121.1"/>
    <property type="molecule type" value="mRNA"/>
</dbReference>
<dbReference type="PIR" id="S21584">
    <property type="entry name" value="S21584"/>
</dbReference>
<dbReference type="RefSeq" id="NP_001234112.1">
    <property type="nucleotide sequence ID" value="NM_001247183.1"/>
</dbReference>
<dbReference type="RefSeq" id="XP_010319693.1">
    <property type="nucleotide sequence ID" value="XM_010321391.4"/>
</dbReference>
<dbReference type="RefSeq" id="XP_010319694.1">
    <property type="nucleotide sequence ID" value="XM_010321392.4"/>
</dbReference>
<dbReference type="SMR" id="Q00497"/>
<dbReference type="FunCoup" id="Q00497">
    <property type="interactions" value="443"/>
</dbReference>
<dbReference type="STRING" id="4081.Q00497"/>
<dbReference type="PaxDb" id="4081-Solyc04g051860.2.1"/>
<dbReference type="EnsemblPlants" id="Solyc04g051860.3.1">
    <property type="protein sequence ID" value="Solyc04g051860.3.1"/>
    <property type="gene ID" value="Solyc04g051860.3"/>
</dbReference>
<dbReference type="GeneID" id="544078"/>
<dbReference type="Gramene" id="Solyc04g051860.3.1">
    <property type="protein sequence ID" value="Solyc04g051860.3.1"/>
    <property type="gene ID" value="Solyc04g051860.3"/>
</dbReference>
<dbReference type="KEGG" id="sly:544078"/>
<dbReference type="eggNOG" id="ENOG502QTKR">
    <property type="taxonomic scope" value="Eukaryota"/>
</dbReference>
<dbReference type="HOGENOM" id="CLU_057607_0_1_1"/>
<dbReference type="InParanoid" id="Q00497"/>
<dbReference type="OMA" id="LHHDSGD"/>
<dbReference type="OrthoDB" id="197068at2759"/>
<dbReference type="PhylomeDB" id="Q00497"/>
<dbReference type="UniPathway" id="UPA00053">
    <property type="reaction ID" value="UER00088"/>
</dbReference>
<dbReference type="Proteomes" id="UP000004994">
    <property type="component" value="Chromosome 4"/>
</dbReference>
<dbReference type="GO" id="GO:0009507">
    <property type="term" value="C:chloroplast"/>
    <property type="evidence" value="ECO:0000318"/>
    <property type="project" value="GO_Central"/>
</dbReference>
<dbReference type="GO" id="GO:0005524">
    <property type="term" value="F:ATP binding"/>
    <property type="evidence" value="ECO:0007669"/>
    <property type="project" value="UniProtKB-KW"/>
</dbReference>
<dbReference type="GO" id="GO:0046872">
    <property type="term" value="F:metal ion binding"/>
    <property type="evidence" value="ECO:0007669"/>
    <property type="project" value="UniProtKB-KW"/>
</dbReference>
<dbReference type="GO" id="GO:0004765">
    <property type="term" value="F:shikimate kinase activity"/>
    <property type="evidence" value="ECO:0000318"/>
    <property type="project" value="GO_Central"/>
</dbReference>
<dbReference type="GO" id="GO:0008652">
    <property type="term" value="P:amino acid biosynthetic process"/>
    <property type="evidence" value="ECO:0007669"/>
    <property type="project" value="UniProtKB-KW"/>
</dbReference>
<dbReference type="GO" id="GO:0009073">
    <property type="term" value="P:aromatic amino acid family biosynthetic process"/>
    <property type="evidence" value="ECO:0007669"/>
    <property type="project" value="UniProtKB-KW"/>
</dbReference>
<dbReference type="GO" id="GO:0009423">
    <property type="term" value="P:chorismate biosynthetic process"/>
    <property type="evidence" value="ECO:0007669"/>
    <property type="project" value="UniProtKB-UniPathway"/>
</dbReference>
<dbReference type="CDD" id="cd00464">
    <property type="entry name" value="SK"/>
    <property type="match status" value="1"/>
</dbReference>
<dbReference type="FunFam" id="3.40.50.300:FF:001033">
    <property type="entry name" value="Shikimate kinase 2, chloroplastic"/>
    <property type="match status" value="1"/>
</dbReference>
<dbReference type="Gene3D" id="3.40.50.300">
    <property type="entry name" value="P-loop containing nucleotide triphosphate hydrolases"/>
    <property type="match status" value="1"/>
</dbReference>
<dbReference type="HAMAP" id="MF_00109">
    <property type="entry name" value="Shikimate_kinase"/>
    <property type="match status" value="1"/>
</dbReference>
<dbReference type="InterPro" id="IPR027417">
    <property type="entry name" value="P-loop_NTPase"/>
</dbReference>
<dbReference type="InterPro" id="IPR031322">
    <property type="entry name" value="Shikimate/glucono_kinase"/>
</dbReference>
<dbReference type="InterPro" id="IPR000623">
    <property type="entry name" value="Shikimate_kinase/TSH1"/>
</dbReference>
<dbReference type="InterPro" id="IPR023000">
    <property type="entry name" value="Shikimate_kinase_CS"/>
</dbReference>
<dbReference type="PANTHER" id="PTHR21087">
    <property type="entry name" value="SHIKIMATE KINASE"/>
    <property type="match status" value="1"/>
</dbReference>
<dbReference type="PANTHER" id="PTHR21087:SF16">
    <property type="entry name" value="SHIKIMATE KINASE 1, CHLOROPLASTIC"/>
    <property type="match status" value="1"/>
</dbReference>
<dbReference type="Pfam" id="PF01202">
    <property type="entry name" value="SKI"/>
    <property type="match status" value="1"/>
</dbReference>
<dbReference type="PRINTS" id="PR01100">
    <property type="entry name" value="SHIKIMTKNASE"/>
</dbReference>
<dbReference type="SUPFAM" id="SSF52540">
    <property type="entry name" value="P-loop containing nucleoside triphosphate hydrolases"/>
    <property type="match status" value="1"/>
</dbReference>
<dbReference type="PROSITE" id="PS01128">
    <property type="entry name" value="SHIKIMATE_KINASE"/>
    <property type="match status" value="1"/>
</dbReference>
<name>SK_SOLLC</name>
<comment type="function">
    <text evidence="3">Catalyzes the specific phosphorylation of the 3-hydroxyl group of shikimic acid using ATP as a cosubstrate.</text>
</comment>
<comment type="catalytic activity">
    <reaction evidence="3">
        <text>shikimate + ATP = 3-phosphoshikimate + ADP + H(+)</text>
        <dbReference type="Rhea" id="RHEA:13121"/>
        <dbReference type="ChEBI" id="CHEBI:15378"/>
        <dbReference type="ChEBI" id="CHEBI:30616"/>
        <dbReference type="ChEBI" id="CHEBI:36208"/>
        <dbReference type="ChEBI" id="CHEBI:145989"/>
        <dbReference type="ChEBI" id="CHEBI:456216"/>
        <dbReference type="EC" id="2.7.1.71"/>
    </reaction>
</comment>
<comment type="cofactor">
    <cofactor evidence="1">
        <name>Mg(2+)</name>
        <dbReference type="ChEBI" id="CHEBI:18420"/>
    </cofactor>
    <text evidence="1">Binds 1 Mg(2+) ion per subunit.</text>
</comment>
<comment type="pathway">
    <text>Metabolic intermediate biosynthesis; chorismate biosynthesis; chorismate from D-erythrose 4-phosphate and phosphoenolpyruvate: step 5/7.</text>
</comment>
<comment type="subcellular location">
    <subcellularLocation>
        <location evidence="3">Plastid</location>
        <location evidence="3">Chloroplast</location>
    </subcellularLocation>
</comment>
<comment type="similarity">
    <text evidence="4">Belongs to the shikimate kinase family.</text>
</comment>
<organism>
    <name type="scientific">Solanum lycopersicum</name>
    <name type="common">Tomato</name>
    <name type="synonym">Lycopersicon esculentum</name>
    <dbReference type="NCBI Taxonomy" id="4081"/>
    <lineage>
        <taxon>Eukaryota</taxon>
        <taxon>Viridiplantae</taxon>
        <taxon>Streptophyta</taxon>
        <taxon>Embryophyta</taxon>
        <taxon>Tracheophyta</taxon>
        <taxon>Spermatophyta</taxon>
        <taxon>Magnoliopsida</taxon>
        <taxon>eudicotyledons</taxon>
        <taxon>Gunneridae</taxon>
        <taxon>Pentapetalae</taxon>
        <taxon>asterids</taxon>
        <taxon>lamiids</taxon>
        <taxon>Solanales</taxon>
        <taxon>Solanaceae</taxon>
        <taxon>Solanoideae</taxon>
        <taxon>Solaneae</taxon>
        <taxon>Solanum</taxon>
        <taxon>Solanum subgen. Lycopersicon</taxon>
    </lineage>
</organism>
<protein>
    <recommendedName>
        <fullName>Shikimate kinase, chloroplastic</fullName>
        <ecNumber>2.7.1.71</ecNumber>
    </recommendedName>
</protein>
<sequence>MEARVSQSLQLSSWINSDKVVRKPSGLLRFSEKWNEKPRHRVVVSCHLQPRKAAHSDRRVQLKVSCSPQNVQASVLESGCFSASIDEIETLKNKAEEVEEYLDGRCVYLVGMMGCGKTTVGRILAETLGYSFFDCDRLIEQAVGGITVAEIFELRGESFFRDNETEVLHKLSLMHRLVVSTGGGAVVRPINWRHMHKGISVWLDVPLEALAKRITTEGTKSRPLLHEESGDVYDTTLKRLTTLMETRGENYANASARVSLENIALKREKDVCHITPAEITLEVLIQIENFLKTQKSVVVL</sequence>
<gene>
    <name type="primary">SK</name>
</gene>
<keyword id="KW-0028">Amino-acid biosynthesis</keyword>
<keyword id="KW-0057">Aromatic amino acid biosynthesis</keyword>
<keyword id="KW-0067">ATP-binding</keyword>
<keyword id="KW-0150">Chloroplast</keyword>
<keyword id="KW-0418">Kinase</keyword>
<keyword id="KW-0460">Magnesium</keyword>
<keyword id="KW-0479">Metal-binding</keyword>
<keyword id="KW-0547">Nucleotide-binding</keyword>
<keyword id="KW-0934">Plastid</keyword>
<keyword id="KW-1185">Reference proteome</keyword>
<keyword id="KW-0808">Transferase</keyword>
<keyword id="KW-0809">Transit peptide</keyword>
<reference key="1">
    <citation type="journal article" date="1992" name="Plant J.">
        <title>The in-vitro synthesized tomato shikimate kinase precursor is enzymatically active and is imported and processed to the mature enzyme by chloroplasts.</title>
        <authorList>
            <person name="Schmid J."/>
            <person name="Schaller A."/>
            <person name="Leibinger U."/>
            <person name="Boll W."/>
            <person name="Amrhein N."/>
        </authorList>
    </citation>
    <scope>NUCLEOTIDE SEQUENCE [MRNA]</scope>
    <scope>FUNCTION</scope>
    <scope>CATALYTIC ACTIVITY</scope>
    <scope>SUBCELLULAR LOCATION</scope>
    <source>
        <strain>cv. UC82B</strain>
        <tissue>Leaf</tissue>
    </source>
</reference>